<comment type="similarity">
    <text evidence="1">Belongs to the glycosyltransferase group 1 family. Glycosyltransferase 4 subfamily.</text>
</comment>
<accession>O34413</accession>
<accession>Q795N3</accession>
<keyword id="KW-0328">Glycosyltransferase</keyword>
<keyword id="KW-1185">Reference proteome</keyword>
<keyword id="KW-0808">Transferase</keyword>
<gene>
    <name type="primary">ytcC</name>
    <name type="ordered locus">BSU30880</name>
</gene>
<organism>
    <name type="scientific">Bacillus subtilis (strain 168)</name>
    <dbReference type="NCBI Taxonomy" id="224308"/>
    <lineage>
        <taxon>Bacteria</taxon>
        <taxon>Bacillati</taxon>
        <taxon>Bacillota</taxon>
        <taxon>Bacilli</taxon>
        <taxon>Bacillales</taxon>
        <taxon>Bacillaceae</taxon>
        <taxon>Bacillus</taxon>
    </lineage>
</organism>
<proteinExistence type="inferred from homology"/>
<feature type="chain" id="PRO_0000378084" description="Putative glycosyltransferase YtcC">
    <location>
        <begin position="1"/>
        <end position="407"/>
    </location>
</feature>
<dbReference type="EC" id="2.4.-.-"/>
<dbReference type="EMBL" id="AF008220">
    <property type="protein sequence ID" value="AAC00365.1"/>
    <property type="molecule type" value="Genomic_DNA"/>
</dbReference>
<dbReference type="EMBL" id="AL009126">
    <property type="protein sequence ID" value="CAB15066.1"/>
    <property type="molecule type" value="Genomic_DNA"/>
</dbReference>
<dbReference type="PIR" id="A69989">
    <property type="entry name" value="A69989"/>
</dbReference>
<dbReference type="RefSeq" id="NP_390966.1">
    <property type="nucleotide sequence ID" value="NC_000964.3"/>
</dbReference>
<dbReference type="RefSeq" id="WP_003229035.1">
    <property type="nucleotide sequence ID" value="NZ_OZ025638.1"/>
</dbReference>
<dbReference type="SMR" id="O34413"/>
<dbReference type="FunCoup" id="O34413">
    <property type="interactions" value="292"/>
</dbReference>
<dbReference type="STRING" id="224308.BSU30880"/>
<dbReference type="CAZy" id="GT4">
    <property type="family name" value="Glycosyltransferase Family 4"/>
</dbReference>
<dbReference type="PaxDb" id="224308-BSU30880"/>
<dbReference type="EnsemblBacteria" id="CAB15066">
    <property type="protein sequence ID" value="CAB15066"/>
    <property type="gene ID" value="BSU_30880"/>
</dbReference>
<dbReference type="GeneID" id="939212"/>
<dbReference type="KEGG" id="bsu:BSU30880"/>
<dbReference type="PATRIC" id="fig|224308.179.peg.3347"/>
<dbReference type="eggNOG" id="COG0438">
    <property type="taxonomic scope" value="Bacteria"/>
</dbReference>
<dbReference type="InParanoid" id="O34413"/>
<dbReference type="OrthoDB" id="139410at2"/>
<dbReference type="PhylomeDB" id="O34413"/>
<dbReference type="BioCyc" id="BSUB:BSU30880-MONOMER"/>
<dbReference type="Proteomes" id="UP000001570">
    <property type="component" value="Chromosome"/>
</dbReference>
<dbReference type="GO" id="GO:0016757">
    <property type="term" value="F:glycosyltransferase activity"/>
    <property type="evidence" value="ECO:0000318"/>
    <property type="project" value="GO_Central"/>
</dbReference>
<dbReference type="GO" id="GO:0009058">
    <property type="term" value="P:biosynthetic process"/>
    <property type="evidence" value="ECO:0007669"/>
    <property type="project" value="UniProtKB-ARBA"/>
</dbReference>
<dbReference type="CDD" id="cd03801">
    <property type="entry name" value="GT4_PimA-like"/>
    <property type="match status" value="1"/>
</dbReference>
<dbReference type="Gene3D" id="3.40.50.2000">
    <property type="entry name" value="Glycogen Phosphorylase B"/>
    <property type="match status" value="2"/>
</dbReference>
<dbReference type="InterPro" id="IPR001296">
    <property type="entry name" value="Glyco_trans_1"/>
</dbReference>
<dbReference type="InterPro" id="IPR028098">
    <property type="entry name" value="Glyco_trans_4-like_N"/>
</dbReference>
<dbReference type="PANTHER" id="PTHR12526">
    <property type="entry name" value="GLYCOSYLTRANSFERASE"/>
    <property type="match status" value="1"/>
</dbReference>
<dbReference type="PANTHER" id="PTHR12526:SF638">
    <property type="entry name" value="SPORE COAT PROTEIN SA"/>
    <property type="match status" value="1"/>
</dbReference>
<dbReference type="Pfam" id="PF13439">
    <property type="entry name" value="Glyco_transf_4"/>
    <property type="match status" value="1"/>
</dbReference>
<dbReference type="Pfam" id="PF00534">
    <property type="entry name" value="Glycos_transf_1"/>
    <property type="match status" value="1"/>
</dbReference>
<dbReference type="SUPFAM" id="SSF53756">
    <property type="entry name" value="UDP-Glycosyltransferase/glycogen phosphorylase"/>
    <property type="match status" value="1"/>
</dbReference>
<sequence>MKLAFICTEKLPAPAVRGGAIQMMIDGVTPYFSSRYDLTIFSIEDPSLPKRETKDGVHYIHLPKEHYREAVAEELRASSFDLIHVFNRPLNVSLYKKASPNSKIVLSLHNEMFSEKKMTFAQGKEVLDNVSMITTVSEFIKQTVIERFPEAEDITKVVYSGVDLNSYPPVWTMKGSAVRKTYRKKYGIEDKKVILFAGRLSPTKGPHLLIHSMRRILQQHPDAVLVIAGGKWFSDDSENQYVTYLRTLALPYRDHIIFTKFIPADDIPNLFLMADVFVCSSQWNEPLARVNYEAMAAGTPLITTNRGGNGEVVKHEVTGLVIDSYNKPSSFAKAIDRAFTDQELMNKMTKNARKHVEALFTFTHAAKRLNTVYQSVLTPKNKQFPPPFLTQNFDLSSINQLFVKAKT</sequence>
<evidence type="ECO:0000305" key="1"/>
<protein>
    <recommendedName>
        <fullName>Putative glycosyltransferase YtcC</fullName>
        <ecNumber>2.4.-.-</ecNumber>
    </recommendedName>
</protein>
<reference key="1">
    <citation type="journal article" date="1997" name="Microbiology">
        <title>Sequencing and functional annotation of the Bacillus subtilis genes in the 200 kb rrnB-dnaB region.</title>
        <authorList>
            <person name="Lapidus A."/>
            <person name="Galleron N."/>
            <person name="Sorokin A."/>
            <person name="Ehrlich S.D."/>
        </authorList>
    </citation>
    <scope>NUCLEOTIDE SEQUENCE [GENOMIC DNA]</scope>
</reference>
<reference key="2">
    <citation type="journal article" date="1997" name="Nature">
        <title>The complete genome sequence of the Gram-positive bacterium Bacillus subtilis.</title>
        <authorList>
            <person name="Kunst F."/>
            <person name="Ogasawara N."/>
            <person name="Moszer I."/>
            <person name="Albertini A.M."/>
            <person name="Alloni G."/>
            <person name="Azevedo V."/>
            <person name="Bertero M.G."/>
            <person name="Bessieres P."/>
            <person name="Bolotin A."/>
            <person name="Borchert S."/>
            <person name="Borriss R."/>
            <person name="Boursier L."/>
            <person name="Brans A."/>
            <person name="Braun M."/>
            <person name="Brignell S.C."/>
            <person name="Bron S."/>
            <person name="Brouillet S."/>
            <person name="Bruschi C.V."/>
            <person name="Caldwell B."/>
            <person name="Capuano V."/>
            <person name="Carter N.M."/>
            <person name="Choi S.-K."/>
            <person name="Codani J.-J."/>
            <person name="Connerton I.F."/>
            <person name="Cummings N.J."/>
            <person name="Daniel R.A."/>
            <person name="Denizot F."/>
            <person name="Devine K.M."/>
            <person name="Duesterhoeft A."/>
            <person name="Ehrlich S.D."/>
            <person name="Emmerson P.T."/>
            <person name="Entian K.-D."/>
            <person name="Errington J."/>
            <person name="Fabret C."/>
            <person name="Ferrari E."/>
            <person name="Foulger D."/>
            <person name="Fritz C."/>
            <person name="Fujita M."/>
            <person name="Fujita Y."/>
            <person name="Fuma S."/>
            <person name="Galizzi A."/>
            <person name="Galleron N."/>
            <person name="Ghim S.-Y."/>
            <person name="Glaser P."/>
            <person name="Goffeau A."/>
            <person name="Golightly E.J."/>
            <person name="Grandi G."/>
            <person name="Guiseppi G."/>
            <person name="Guy B.J."/>
            <person name="Haga K."/>
            <person name="Haiech J."/>
            <person name="Harwood C.R."/>
            <person name="Henaut A."/>
            <person name="Hilbert H."/>
            <person name="Holsappel S."/>
            <person name="Hosono S."/>
            <person name="Hullo M.-F."/>
            <person name="Itaya M."/>
            <person name="Jones L.-M."/>
            <person name="Joris B."/>
            <person name="Karamata D."/>
            <person name="Kasahara Y."/>
            <person name="Klaerr-Blanchard M."/>
            <person name="Klein C."/>
            <person name="Kobayashi Y."/>
            <person name="Koetter P."/>
            <person name="Koningstein G."/>
            <person name="Krogh S."/>
            <person name="Kumano M."/>
            <person name="Kurita K."/>
            <person name="Lapidus A."/>
            <person name="Lardinois S."/>
            <person name="Lauber J."/>
            <person name="Lazarevic V."/>
            <person name="Lee S.-M."/>
            <person name="Levine A."/>
            <person name="Liu H."/>
            <person name="Masuda S."/>
            <person name="Mauel C."/>
            <person name="Medigue C."/>
            <person name="Medina N."/>
            <person name="Mellado R.P."/>
            <person name="Mizuno M."/>
            <person name="Moestl D."/>
            <person name="Nakai S."/>
            <person name="Noback M."/>
            <person name="Noone D."/>
            <person name="O'Reilly M."/>
            <person name="Ogawa K."/>
            <person name="Ogiwara A."/>
            <person name="Oudega B."/>
            <person name="Park S.-H."/>
            <person name="Parro V."/>
            <person name="Pohl T.M."/>
            <person name="Portetelle D."/>
            <person name="Porwollik S."/>
            <person name="Prescott A.M."/>
            <person name="Presecan E."/>
            <person name="Pujic P."/>
            <person name="Purnelle B."/>
            <person name="Rapoport G."/>
            <person name="Rey M."/>
            <person name="Reynolds S."/>
            <person name="Rieger M."/>
            <person name="Rivolta C."/>
            <person name="Rocha E."/>
            <person name="Roche B."/>
            <person name="Rose M."/>
            <person name="Sadaie Y."/>
            <person name="Sato T."/>
            <person name="Scanlan E."/>
            <person name="Schleich S."/>
            <person name="Schroeter R."/>
            <person name="Scoffone F."/>
            <person name="Sekiguchi J."/>
            <person name="Sekowska A."/>
            <person name="Seror S.J."/>
            <person name="Serror P."/>
            <person name="Shin B.-S."/>
            <person name="Soldo B."/>
            <person name="Sorokin A."/>
            <person name="Tacconi E."/>
            <person name="Takagi T."/>
            <person name="Takahashi H."/>
            <person name="Takemaru K."/>
            <person name="Takeuchi M."/>
            <person name="Tamakoshi A."/>
            <person name="Tanaka T."/>
            <person name="Terpstra P."/>
            <person name="Tognoni A."/>
            <person name="Tosato V."/>
            <person name="Uchiyama S."/>
            <person name="Vandenbol M."/>
            <person name="Vannier F."/>
            <person name="Vassarotti A."/>
            <person name="Viari A."/>
            <person name="Wambutt R."/>
            <person name="Wedler E."/>
            <person name="Wedler H."/>
            <person name="Weitzenegger T."/>
            <person name="Winters P."/>
            <person name="Wipat A."/>
            <person name="Yamamoto H."/>
            <person name="Yamane K."/>
            <person name="Yasumoto K."/>
            <person name="Yata K."/>
            <person name="Yoshida K."/>
            <person name="Yoshikawa H.-F."/>
            <person name="Zumstein E."/>
            <person name="Yoshikawa H."/>
            <person name="Danchin A."/>
        </authorList>
    </citation>
    <scope>NUCLEOTIDE SEQUENCE [LARGE SCALE GENOMIC DNA]</scope>
    <source>
        <strain>168</strain>
    </source>
</reference>
<name>YTCC_BACSU</name>